<reference key="1">
    <citation type="journal article" date="2003" name="Mol. Microbiol.">
        <title>Genome-based analysis of virulence genes in a non-biofilm-forming Staphylococcus epidermidis strain (ATCC 12228).</title>
        <authorList>
            <person name="Zhang Y.-Q."/>
            <person name="Ren S.-X."/>
            <person name="Li H.-L."/>
            <person name="Wang Y.-X."/>
            <person name="Fu G."/>
            <person name="Yang J."/>
            <person name="Qin Z.-Q."/>
            <person name="Miao Y.-G."/>
            <person name="Wang W.-Y."/>
            <person name="Chen R.-S."/>
            <person name="Shen Y."/>
            <person name="Chen Z."/>
            <person name="Yuan Z.-H."/>
            <person name="Zhao G.-P."/>
            <person name="Qu D."/>
            <person name="Danchin A."/>
            <person name="Wen Y.-M."/>
        </authorList>
    </citation>
    <scope>NUCLEOTIDE SEQUENCE [LARGE SCALE GENOMIC DNA]</scope>
    <source>
        <strain>ATCC 12228 / FDA PCI 1200</strain>
    </source>
</reference>
<protein>
    <recommendedName>
        <fullName>Glutamyl endopeptidase</fullName>
        <ecNumber>3.4.21.19</ecNumber>
    </recommendedName>
    <alternativeName>
        <fullName>Glutamic acid-specific protease</fullName>
        <shortName>GluSE</shortName>
    </alternativeName>
</protein>
<evidence type="ECO:0000250" key="1"/>
<evidence type="ECO:0000255" key="2"/>
<evidence type="ECO:0000255" key="3">
    <source>
        <dbReference type="PROSITE-ProRule" id="PRU10083"/>
    </source>
</evidence>
<evidence type="ECO:0000305" key="4"/>
<evidence type="ECO:0007829" key="5">
    <source>
        <dbReference type="PDB" id="6PYM"/>
    </source>
</evidence>
<proteinExistence type="evidence at protein level"/>
<comment type="function">
    <text evidence="1">Exhibits a significant hydrolytic activity for the carbonyl side of glutamic acid. Shows activity toward human fibronectin and type 1 collagen (By similarity).</text>
</comment>
<comment type="catalytic activity">
    <reaction evidence="3">
        <text>Preferential cleavage: Glu-|-Xaa, Asp-|-Xaa.</text>
        <dbReference type="EC" id="3.4.21.19"/>
    </reaction>
</comment>
<comment type="subunit">
    <text evidence="1">Monomer.</text>
</comment>
<comment type="subcellular location">
    <subcellularLocation>
        <location evidence="1">Secreted</location>
    </subcellularLocation>
</comment>
<comment type="similarity">
    <text evidence="4">Belongs to the peptidase S1B family.</text>
</comment>
<dbReference type="EC" id="3.4.21.19"/>
<dbReference type="EMBL" id="AE015929">
    <property type="protein sequence ID" value="AAO05142.1"/>
    <property type="molecule type" value="Genomic_DNA"/>
</dbReference>
<dbReference type="RefSeq" id="NP_765098.1">
    <property type="nucleotide sequence ID" value="NC_004461.1"/>
</dbReference>
<dbReference type="RefSeq" id="WP_001829860.1">
    <property type="nucleotide sequence ID" value="NZ_WBME01000083.1"/>
</dbReference>
<dbReference type="PDB" id="4JCN">
    <property type="method" value="X-ray"/>
    <property type="resolution" value="1.80 A"/>
    <property type="chains" value="A=67-282"/>
</dbReference>
<dbReference type="PDB" id="6PYM">
    <property type="method" value="X-ray"/>
    <property type="resolution" value="1.20 A"/>
    <property type="chains" value="A=67-282"/>
</dbReference>
<dbReference type="PDB" id="6Q12">
    <property type="method" value="X-ray"/>
    <property type="resolution" value="2.20 A"/>
    <property type="chains" value="A/B=56-282"/>
</dbReference>
<dbReference type="PDB" id="6Q24">
    <property type="method" value="X-ray"/>
    <property type="resolution" value="1.85 A"/>
    <property type="chains" value="A=56-282"/>
</dbReference>
<dbReference type="PDB" id="6TYA">
    <property type="method" value="X-ray"/>
    <property type="resolution" value="2.07 A"/>
    <property type="chains" value="A=66-282"/>
</dbReference>
<dbReference type="PDB" id="6U1B">
    <property type="method" value="X-ray"/>
    <property type="resolution" value="2.08 A"/>
    <property type="chains" value="A=59-282"/>
</dbReference>
<dbReference type="PDBsum" id="4JCN"/>
<dbReference type="PDBsum" id="6PYM"/>
<dbReference type="PDBsum" id="6Q12"/>
<dbReference type="PDBsum" id="6Q24"/>
<dbReference type="PDBsum" id="6TYA"/>
<dbReference type="PDBsum" id="6U1B"/>
<dbReference type="SMR" id="P0C0Q2"/>
<dbReference type="MEROPS" id="S01.522"/>
<dbReference type="KEGG" id="sep:SE_1543"/>
<dbReference type="PATRIC" id="fig|176280.10.peg.1509"/>
<dbReference type="eggNOG" id="COG3591">
    <property type="taxonomic scope" value="Bacteria"/>
</dbReference>
<dbReference type="HOGENOM" id="CLU_073589_1_0_9"/>
<dbReference type="OrthoDB" id="191045at2"/>
<dbReference type="EvolutionaryTrace" id="P0C0Q2"/>
<dbReference type="Proteomes" id="UP000001411">
    <property type="component" value="Chromosome"/>
</dbReference>
<dbReference type="GO" id="GO:0005576">
    <property type="term" value="C:extracellular region"/>
    <property type="evidence" value="ECO:0007669"/>
    <property type="project" value="UniProtKB-SubCell"/>
</dbReference>
<dbReference type="GO" id="GO:0004252">
    <property type="term" value="F:serine-type endopeptidase activity"/>
    <property type="evidence" value="ECO:0007669"/>
    <property type="project" value="InterPro"/>
</dbReference>
<dbReference type="GO" id="GO:0006508">
    <property type="term" value="P:proteolysis"/>
    <property type="evidence" value="ECO:0007669"/>
    <property type="project" value="UniProtKB-KW"/>
</dbReference>
<dbReference type="Gene3D" id="2.40.10.10">
    <property type="entry name" value="Trypsin-like serine proteases"/>
    <property type="match status" value="2"/>
</dbReference>
<dbReference type="InterPro" id="IPR050966">
    <property type="entry name" value="Glutamyl_endopeptidase"/>
</dbReference>
<dbReference type="InterPro" id="IPR009003">
    <property type="entry name" value="Peptidase_S1_PA"/>
</dbReference>
<dbReference type="InterPro" id="IPR043504">
    <property type="entry name" value="Peptidase_S1_PA_chymotrypsin"/>
</dbReference>
<dbReference type="InterPro" id="IPR008256">
    <property type="entry name" value="Peptidase_S1B"/>
</dbReference>
<dbReference type="InterPro" id="IPR008353">
    <property type="entry name" value="Peptidase_S1B_tx"/>
</dbReference>
<dbReference type="InterPro" id="IPR000126">
    <property type="entry name" value="V8_ser_AS"/>
</dbReference>
<dbReference type="PANTHER" id="PTHR15462">
    <property type="entry name" value="SERINE PROTEASE"/>
    <property type="match status" value="1"/>
</dbReference>
<dbReference type="PANTHER" id="PTHR15462:SF8">
    <property type="entry name" value="SERINE PROTEASE"/>
    <property type="match status" value="1"/>
</dbReference>
<dbReference type="Pfam" id="PF13365">
    <property type="entry name" value="Trypsin_2"/>
    <property type="match status" value="1"/>
</dbReference>
<dbReference type="PRINTS" id="PR01774">
    <property type="entry name" value="EXFOLTOXIN"/>
</dbReference>
<dbReference type="PRINTS" id="PR00839">
    <property type="entry name" value="V8PROTEASE"/>
</dbReference>
<dbReference type="SUPFAM" id="SSF50494">
    <property type="entry name" value="Trypsin-like serine proteases"/>
    <property type="match status" value="1"/>
</dbReference>
<dbReference type="PROSITE" id="PS00673">
    <property type="entry name" value="V8_SER"/>
    <property type="match status" value="1"/>
</dbReference>
<sequence>MKKRFLSICTMTIAALATTTMVNTSYAKTDTESHNHSSLGTENKNVLDINSSSHNIKPSQNKSYPSVILPNNNRHQIFNTTQGHYDAVSFIYIPIDGGYMSGSGVVVGENEILTNKHVVNGAKGNPRNISVHPSAKNENDYPNGKFVGQEIIPYPGNSDLAILRVSPNEHNQHIGQVVKPATISSNTDTRINENITVTGYPGDKPLATMWESVGKVVYIGGEELRYDLSTVGGNSGSPVFNGKNQVIGIHYGGVDNKYNSSVYINDFVQQFLRNNIPDINIQ</sequence>
<gene>
    <name type="primary">gseA</name>
    <name type="synonym">esp</name>
    <name type="ordered locus">SE_1543</name>
</gene>
<name>GSEA_STAES</name>
<feature type="signal peptide" evidence="2">
    <location>
        <begin position="1"/>
        <end position="27"/>
    </location>
</feature>
<feature type="propeptide" id="PRO_0000042921" evidence="1">
    <location>
        <begin position="28"/>
        <end position="66"/>
    </location>
</feature>
<feature type="chain" id="PRO_0000042922" description="Glutamyl endopeptidase">
    <location>
        <begin position="67"/>
        <end position="282"/>
    </location>
</feature>
<feature type="active site" description="Charge relay system" evidence="3">
    <location>
        <position position="117"/>
    </location>
</feature>
<feature type="active site" description="Charge relay system" evidence="3">
    <location>
        <position position="159"/>
    </location>
</feature>
<feature type="active site" description="Charge relay system" evidence="3">
    <location>
        <position position="235"/>
    </location>
</feature>
<feature type="strand" evidence="5">
    <location>
        <begin position="74"/>
        <end position="78"/>
    </location>
</feature>
<feature type="helix" evidence="5">
    <location>
        <begin position="83"/>
        <end position="85"/>
    </location>
</feature>
<feature type="strand" evidence="5">
    <location>
        <begin position="88"/>
        <end position="93"/>
    </location>
</feature>
<feature type="strand" evidence="5">
    <location>
        <begin position="100"/>
        <end position="108"/>
    </location>
</feature>
<feature type="strand" evidence="5">
    <location>
        <begin position="111"/>
        <end position="114"/>
    </location>
</feature>
<feature type="helix" evidence="5">
    <location>
        <begin position="116"/>
        <end position="119"/>
    </location>
</feature>
<feature type="helix" evidence="5">
    <location>
        <begin position="120"/>
        <end position="122"/>
    </location>
</feature>
<feature type="helix" evidence="5">
    <location>
        <begin position="126"/>
        <end position="128"/>
    </location>
</feature>
<feature type="strand" evidence="5">
    <location>
        <begin position="130"/>
        <end position="133"/>
    </location>
</feature>
<feature type="strand" evidence="5">
    <location>
        <begin position="146"/>
        <end position="153"/>
    </location>
</feature>
<feature type="strand" evidence="5">
    <location>
        <begin position="155"/>
        <end position="159"/>
    </location>
</feature>
<feature type="strand" evidence="5">
    <location>
        <begin position="161"/>
        <end position="165"/>
    </location>
</feature>
<feature type="helix" evidence="5">
    <location>
        <begin position="174"/>
        <end position="177"/>
    </location>
</feature>
<feature type="strand" evidence="5">
    <location>
        <begin position="194"/>
        <end position="199"/>
    </location>
</feature>
<feature type="strand" evidence="5">
    <location>
        <begin position="209"/>
        <end position="220"/>
    </location>
</feature>
<feature type="strand" evidence="5">
    <location>
        <begin position="223"/>
        <end position="228"/>
    </location>
</feature>
<feature type="strand" evidence="5">
    <location>
        <begin position="238"/>
        <end position="240"/>
    </location>
</feature>
<feature type="strand" evidence="5">
    <location>
        <begin position="246"/>
        <end position="254"/>
    </location>
</feature>
<feature type="turn" evidence="5">
    <location>
        <begin position="255"/>
        <end position="257"/>
    </location>
</feature>
<feature type="strand" evidence="5">
    <location>
        <begin position="258"/>
        <end position="263"/>
    </location>
</feature>
<feature type="helix" evidence="5">
    <location>
        <begin position="266"/>
        <end position="275"/>
    </location>
</feature>
<keyword id="KW-0002">3D-structure</keyword>
<keyword id="KW-0378">Hydrolase</keyword>
<keyword id="KW-0645">Protease</keyword>
<keyword id="KW-0964">Secreted</keyword>
<keyword id="KW-0720">Serine protease</keyword>
<keyword id="KW-0732">Signal</keyword>
<keyword id="KW-0843">Virulence</keyword>
<keyword id="KW-0865">Zymogen</keyword>
<accession>P0C0Q2</accession>
<accession>Q7DG19</accession>
<accession>Q8CMC1</accession>
<accession>Q9AJX0</accession>
<organism>
    <name type="scientific">Staphylococcus epidermidis (strain ATCC 12228 / FDA PCI 1200)</name>
    <dbReference type="NCBI Taxonomy" id="176280"/>
    <lineage>
        <taxon>Bacteria</taxon>
        <taxon>Bacillati</taxon>
        <taxon>Bacillota</taxon>
        <taxon>Bacilli</taxon>
        <taxon>Bacillales</taxon>
        <taxon>Staphylococcaceae</taxon>
        <taxon>Staphylococcus</taxon>
    </lineage>
</organism>